<dbReference type="EC" id="5.6.1.7" evidence="1"/>
<dbReference type="EMBL" id="FM177140">
    <property type="protein sequence ID" value="CAQ67486.1"/>
    <property type="molecule type" value="Genomic_DNA"/>
</dbReference>
<dbReference type="SMR" id="B3W9W7"/>
<dbReference type="KEGG" id="lcb:LCABL_24200"/>
<dbReference type="HOGENOM" id="CLU_016503_3_0_9"/>
<dbReference type="GO" id="GO:0005737">
    <property type="term" value="C:cytoplasm"/>
    <property type="evidence" value="ECO:0007669"/>
    <property type="project" value="UniProtKB-SubCell"/>
</dbReference>
<dbReference type="GO" id="GO:0005524">
    <property type="term" value="F:ATP binding"/>
    <property type="evidence" value="ECO:0007669"/>
    <property type="project" value="UniProtKB-UniRule"/>
</dbReference>
<dbReference type="GO" id="GO:0140662">
    <property type="term" value="F:ATP-dependent protein folding chaperone"/>
    <property type="evidence" value="ECO:0007669"/>
    <property type="project" value="InterPro"/>
</dbReference>
<dbReference type="GO" id="GO:0016853">
    <property type="term" value="F:isomerase activity"/>
    <property type="evidence" value="ECO:0007669"/>
    <property type="project" value="UniProtKB-KW"/>
</dbReference>
<dbReference type="GO" id="GO:0051082">
    <property type="term" value="F:unfolded protein binding"/>
    <property type="evidence" value="ECO:0007669"/>
    <property type="project" value="UniProtKB-UniRule"/>
</dbReference>
<dbReference type="GO" id="GO:0042026">
    <property type="term" value="P:protein refolding"/>
    <property type="evidence" value="ECO:0007669"/>
    <property type="project" value="UniProtKB-UniRule"/>
</dbReference>
<dbReference type="CDD" id="cd03344">
    <property type="entry name" value="GroEL"/>
    <property type="match status" value="1"/>
</dbReference>
<dbReference type="FunFam" id="1.10.560.10:FF:000001">
    <property type="entry name" value="60 kDa chaperonin"/>
    <property type="match status" value="1"/>
</dbReference>
<dbReference type="FunFam" id="3.50.7.10:FF:000001">
    <property type="entry name" value="60 kDa chaperonin"/>
    <property type="match status" value="1"/>
</dbReference>
<dbReference type="Gene3D" id="3.50.7.10">
    <property type="entry name" value="GroEL"/>
    <property type="match status" value="1"/>
</dbReference>
<dbReference type="Gene3D" id="1.10.560.10">
    <property type="entry name" value="GroEL-like equatorial domain"/>
    <property type="match status" value="1"/>
</dbReference>
<dbReference type="Gene3D" id="3.30.260.10">
    <property type="entry name" value="TCP-1-like chaperonin intermediate domain"/>
    <property type="match status" value="1"/>
</dbReference>
<dbReference type="HAMAP" id="MF_00600">
    <property type="entry name" value="CH60"/>
    <property type="match status" value="1"/>
</dbReference>
<dbReference type="InterPro" id="IPR018370">
    <property type="entry name" value="Chaperonin_Cpn60_CS"/>
</dbReference>
<dbReference type="InterPro" id="IPR001844">
    <property type="entry name" value="Cpn60/GroEL"/>
</dbReference>
<dbReference type="InterPro" id="IPR002423">
    <property type="entry name" value="Cpn60/GroEL/TCP-1"/>
</dbReference>
<dbReference type="InterPro" id="IPR027409">
    <property type="entry name" value="GroEL-like_apical_dom_sf"/>
</dbReference>
<dbReference type="InterPro" id="IPR027413">
    <property type="entry name" value="GROEL-like_equatorial_sf"/>
</dbReference>
<dbReference type="InterPro" id="IPR027410">
    <property type="entry name" value="TCP-1-like_intermed_sf"/>
</dbReference>
<dbReference type="NCBIfam" id="TIGR02348">
    <property type="entry name" value="GroEL"/>
    <property type="match status" value="1"/>
</dbReference>
<dbReference type="NCBIfam" id="NF000592">
    <property type="entry name" value="PRK00013.1"/>
    <property type="match status" value="1"/>
</dbReference>
<dbReference type="NCBIfam" id="NF009487">
    <property type="entry name" value="PRK12849.1"/>
    <property type="match status" value="1"/>
</dbReference>
<dbReference type="NCBIfam" id="NF009488">
    <property type="entry name" value="PRK12850.1"/>
    <property type="match status" value="1"/>
</dbReference>
<dbReference type="NCBIfam" id="NF009489">
    <property type="entry name" value="PRK12851.1"/>
    <property type="match status" value="1"/>
</dbReference>
<dbReference type="PANTHER" id="PTHR45633">
    <property type="entry name" value="60 KDA HEAT SHOCK PROTEIN, MITOCHONDRIAL"/>
    <property type="match status" value="1"/>
</dbReference>
<dbReference type="Pfam" id="PF00118">
    <property type="entry name" value="Cpn60_TCP1"/>
    <property type="match status" value="1"/>
</dbReference>
<dbReference type="PRINTS" id="PR00298">
    <property type="entry name" value="CHAPERONIN60"/>
</dbReference>
<dbReference type="SUPFAM" id="SSF52029">
    <property type="entry name" value="GroEL apical domain-like"/>
    <property type="match status" value="1"/>
</dbReference>
<dbReference type="SUPFAM" id="SSF48592">
    <property type="entry name" value="GroEL equatorial domain-like"/>
    <property type="match status" value="2"/>
</dbReference>
<dbReference type="PROSITE" id="PS00296">
    <property type="entry name" value="CHAPERONINS_CPN60"/>
    <property type="match status" value="1"/>
</dbReference>
<evidence type="ECO:0000255" key="1">
    <source>
        <dbReference type="HAMAP-Rule" id="MF_00600"/>
    </source>
</evidence>
<evidence type="ECO:0000256" key="2">
    <source>
        <dbReference type="SAM" id="MobiDB-lite"/>
    </source>
</evidence>
<sequence>MAKEIKFSEDARAAMLRGVDQLANTVKTTLGPKGRNVVLDKSYGSPEITNDGVTIAKSIDLEDHYENMGAKLVAEVASKTNDIAGDGTTTATVLAQSIIREGMKNVTAGANPVGIRTGIEKATKAAVDELHKISHKVNGKKEIAQVASVSSSNTEVGSLIADAMEKVGHDGVITIEESKGIDTELSVVEGMQFDRGYLSQYMVTDNDKMEADLDDPYILITDKKISNIQDILPLLQEIVQQGKALLIIADDVAGEALPTLVLNKIRGTFNVVAVKAPGFGDRRKAQLEDIATLTGGTVISSDLGLDLKDTKLEQLGRAGKVTVTKDNTTIVDGAGSKDAIAERVNIIKKQIDDTTSDFDREKLQERLAKLAGGVAVVKVGAATETELKERKYRIEDALNATRAAVEEGYVAGGGTALVDVLPAVAALKEEGDVQTGINIVLRALEEPVRQIAENAGKEGSVIVEQLKKEKQGVGYNAATDEWEDMAKSGIIDPTKVTRSALQNAASVAALMLTTEAVVADKPDPNANNNAAAGANPAAGMGGMM</sequence>
<accession>B3W9W7</accession>
<gene>
    <name evidence="1" type="primary">groEL</name>
    <name evidence="1" type="synonym">groL</name>
    <name type="ordered locus">LCABL_24200</name>
</gene>
<comment type="function">
    <text evidence="1">Together with its co-chaperonin GroES, plays an essential role in assisting protein folding. The GroEL-GroES system forms a nano-cage that allows encapsulation of the non-native substrate proteins and provides a physical environment optimized to promote and accelerate protein folding.</text>
</comment>
<comment type="catalytic activity">
    <reaction evidence="1">
        <text>ATP + H2O + a folded polypeptide = ADP + phosphate + an unfolded polypeptide.</text>
        <dbReference type="EC" id="5.6.1.7"/>
    </reaction>
</comment>
<comment type="subunit">
    <text evidence="1">Forms a cylinder of 14 subunits composed of two heptameric rings stacked back-to-back. Interacts with the co-chaperonin GroES.</text>
</comment>
<comment type="subcellular location">
    <subcellularLocation>
        <location evidence="1">Cytoplasm</location>
    </subcellularLocation>
</comment>
<comment type="similarity">
    <text evidence="1">Belongs to the chaperonin (HSP60) family.</text>
</comment>
<name>CH60_LACCB</name>
<reference key="1">
    <citation type="submission" date="2008-06" db="EMBL/GenBank/DDBJ databases">
        <title>Lactobacillus casei BL23 complete genome sequence.</title>
        <authorList>
            <person name="Maze A."/>
            <person name="Boel G."/>
            <person name="Bourand A."/>
            <person name="Loux V."/>
            <person name="Gibrat J.F."/>
            <person name="Zuniga M."/>
            <person name="Hartke A."/>
            <person name="Deutscher J."/>
        </authorList>
    </citation>
    <scope>NUCLEOTIDE SEQUENCE [LARGE SCALE GENOMIC DNA]</scope>
    <source>
        <strain>BL23</strain>
    </source>
</reference>
<organism>
    <name type="scientific">Lacticaseibacillus casei (strain BL23)</name>
    <name type="common">Lactobacillus casei</name>
    <dbReference type="NCBI Taxonomy" id="543734"/>
    <lineage>
        <taxon>Bacteria</taxon>
        <taxon>Bacillati</taxon>
        <taxon>Bacillota</taxon>
        <taxon>Bacilli</taxon>
        <taxon>Lactobacillales</taxon>
        <taxon>Lactobacillaceae</taxon>
        <taxon>Lacticaseibacillus</taxon>
    </lineage>
</organism>
<proteinExistence type="inferred from homology"/>
<keyword id="KW-0067">ATP-binding</keyword>
<keyword id="KW-0143">Chaperone</keyword>
<keyword id="KW-0963">Cytoplasm</keyword>
<keyword id="KW-0413">Isomerase</keyword>
<keyword id="KW-0547">Nucleotide-binding</keyword>
<protein>
    <recommendedName>
        <fullName evidence="1">Chaperonin GroEL</fullName>
        <ecNumber evidence="1">5.6.1.7</ecNumber>
    </recommendedName>
    <alternativeName>
        <fullName evidence="1">60 kDa chaperonin</fullName>
    </alternativeName>
    <alternativeName>
        <fullName evidence="1">Chaperonin-60</fullName>
        <shortName evidence="1">Cpn60</shortName>
    </alternativeName>
</protein>
<feature type="chain" id="PRO_1000130029" description="Chaperonin GroEL">
    <location>
        <begin position="1"/>
        <end position="544"/>
    </location>
</feature>
<feature type="region of interest" description="Disordered" evidence="2">
    <location>
        <begin position="522"/>
        <end position="544"/>
    </location>
</feature>
<feature type="compositionally biased region" description="Low complexity" evidence="2">
    <location>
        <begin position="524"/>
        <end position="538"/>
    </location>
</feature>
<feature type="binding site" evidence="1">
    <location>
        <begin position="29"/>
        <end position="32"/>
    </location>
    <ligand>
        <name>ATP</name>
        <dbReference type="ChEBI" id="CHEBI:30616"/>
    </ligand>
</feature>
<feature type="binding site" evidence="1">
    <location>
        <begin position="86"/>
        <end position="90"/>
    </location>
    <ligand>
        <name>ATP</name>
        <dbReference type="ChEBI" id="CHEBI:30616"/>
    </ligand>
</feature>
<feature type="binding site" evidence="1">
    <location>
        <position position="413"/>
    </location>
    <ligand>
        <name>ATP</name>
        <dbReference type="ChEBI" id="CHEBI:30616"/>
    </ligand>
</feature>
<feature type="binding site" evidence="1">
    <location>
        <begin position="476"/>
        <end position="478"/>
    </location>
    <ligand>
        <name>ATP</name>
        <dbReference type="ChEBI" id="CHEBI:30616"/>
    </ligand>
</feature>
<feature type="binding site" evidence="1">
    <location>
        <position position="492"/>
    </location>
    <ligand>
        <name>ATP</name>
        <dbReference type="ChEBI" id="CHEBI:30616"/>
    </ligand>
</feature>